<keyword id="KW-0687">Ribonucleoprotein</keyword>
<keyword id="KW-0689">Ribosomal protein</keyword>
<keyword id="KW-0694">RNA-binding</keyword>
<keyword id="KW-0699">rRNA-binding</keyword>
<protein>
    <recommendedName>
        <fullName evidence="1">Large ribosomal subunit protein uL24</fullName>
    </recommendedName>
    <alternativeName>
        <fullName evidence="2">50S ribosomal protein L24</fullName>
    </alternativeName>
</protein>
<dbReference type="EMBL" id="CP000440">
    <property type="protein sequence ID" value="ABI85838.1"/>
    <property type="molecule type" value="Genomic_DNA"/>
</dbReference>
<dbReference type="RefSeq" id="WP_006477187.1">
    <property type="nucleotide sequence ID" value="NZ_CP009798.1"/>
</dbReference>
<dbReference type="SMR" id="Q0BJ35"/>
<dbReference type="GeneID" id="98107149"/>
<dbReference type="KEGG" id="bam:Bamb_0278"/>
<dbReference type="PATRIC" id="fig|339670.21.peg.1342"/>
<dbReference type="eggNOG" id="COG0198">
    <property type="taxonomic scope" value="Bacteria"/>
</dbReference>
<dbReference type="Proteomes" id="UP000000662">
    <property type="component" value="Chromosome 1"/>
</dbReference>
<dbReference type="GO" id="GO:1990904">
    <property type="term" value="C:ribonucleoprotein complex"/>
    <property type="evidence" value="ECO:0007669"/>
    <property type="project" value="UniProtKB-KW"/>
</dbReference>
<dbReference type="GO" id="GO:0005840">
    <property type="term" value="C:ribosome"/>
    <property type="evidence" value="ECO:0007669"/>
    <property type="project" value="UniProtKB-KW"/>
</dbReference>
<dbReference type="GO" id="GO:0019843">
    <property type="term" value="F:rRNA binding"/>
    <property type="evidence" value="ECO:0007669"/>
    <property type="project" value="UniProtKB-UniRule"/>
</dbReference>
<dbReference type="GO" id="GO:0003735">
    <property type="term" value="F:structural constituent of ribosome"/>
    <property type="evidence" value="ECO:0007669"/>
    <property type="project" value="InterPro"/>
</dbReference>
<dbReference type="GO" id="GO:0006412">
    <property type="term" value="P:translation"/>
    <property type="evidence" value="ECO:0007669"/>
    <property type="project" value="UniProtKB-UniRule"/>
</dbReference>
<dbReference type="CDD" id="cd06089">
    <property type="entry name" value="KOW_RPL26"/>
    <property type="match status" value="1"/>
</dbReference>
<dbReference type="Gene3D" id="2.30.30.30">
    <property type="match status" value="1"/>
</dbReference>
<dbReference type="HAMAP" id="MF_01326_B">
    <property type="entry name" value="Ribosomal_uL24_B"/>
    <property type="match status" value="1"/>
</dbReference>
<dbReference type="InterPro" id="IPR014722">
    <property type="entry name" value="Rib_uL2_dom2"/>
</dbReference>
<dbReference type="InterPro" id="IPR003256">
    <property type="entry name" value="Ribosomal_uL24"/>
</dbReference>
<dbReference type="InterPro" id="IPR005825">
    <property type="entry name" value="Ribosomal_uL24_CS"/>
</dbReference>
<dbReference type="InterPro" id="IPR041988">
    <property type="entry name" value="Ribosomal_uL24_KOW"/>
</dbReference>
<dbReference type="InterPro" id="IPR008991">
    <property type="entry name" value="Translation_prot_SH3-like_sf"/>
</dbReference>
<dbReference type="NCBIfam" id="TIGR01079">
    <property type="entry name" value="rplX_bact"/>
    <property type="match status" value="1"/>
</dbReference>
<dbReference type="PANTHER" id="PTHR12903">
    <property type="entry name" value="MITOCHONDRIAL RIBOSOMAL PROTEIN L24"/>
    <property type="match status" value="1"/>
</dbReference>
<dbReference type="Pfam" id="PF17136">
    <property type="entry name" value="ribosomal_L24"/>
    <property type="match status" value="1"/>
</dbReference>
<dbReference type="SUPFAM" id="SSF50104">
    <property type="entry name" value="Translation proteins SH3-like domain"/>
    <property type="match status" value="1"/>
</dbReference>
<dbReference type="PROSITE" id="PS01108">
    <property type="entry name" value="RIBOSOMAL_L24"/>
    <property type="match status" value="1"/>
</dbReference>
<organism>
    <name type="scientific">Burkholderia ambifaria (strain ATCC BAA-244 / DSM 16087 / CCUG 44356 / LMG 19182 / AMMD)</name>
    <name type="common">Burkholderia cepacia (strain AMMD)</name>
    <dbReference type="NCBI Taxonomy" id="339670"/>
    <lineage>
        <taxon>Bacteria</taxon>
        <taxon>Pseudomonadati</taxon>
        <taxon>Pseudomonadota</taxon>
        <taxon>Betaproteobacteria</taxon>
        <taxon>Burkholderiales</taxon>
        <taxon>Burkholderiaceae</taxon>
        <taxon>Burkholderia</taxon>
        <taxon>Burkholderia cepacia complex</taxon>
    </lineage>
</organism>
<feature type="chain" id="PRO_1000052191" description="Large ribosomal subunit protein uL24">
    <location>
        <begin position="1"/>
        <end position="102"/>
    </location>
</feature>
<name>RL24_BURCM</name>
<accession>Q0BJ35</accession>
<reference key="1">
    <citation type="submission" date="2006-08" db="EMBL/GenBank/DDBJ databases">
        <title>Complete sequence of chromosome 1 of Burkholderia cepacia AMMD.</title>
        <authorList>
            <person name="Copeland A."/>
            <person name="Lucas S."/>
            <person name="Lapidus A."/>
            <person name="Barry K."/>
            <person name="Detter J.C."/>
            <person name="Glavina del Rio T."/>
            <person name="Hammon N."/>
            <person name="Israni S."/>
            <person name="Pitluck S."/>
            <person name="Bruce D."/>
            <person name="Chain P."/>
            <person name="Malfatti S."/>
            <person name="Shin M."/>
            <person name="Vergez L."/>
            <person name="Schmutz J."/>
            <person name="Larimer F."/>
            <person name="Land M."/>
            <person name="Hauser L."/>
            <person name="Kyrpides N."/>
            <person name="Kim E."/>
            <person name="Parke J."/>
            <person name="Coenye T."/>
            <person name="Konstantinidis K."/>
            <person name="Ramette A."/>
            <person name="Tiedje J."/>
            <person name="Richardson P."/>
        </authorList>
    </citation>
    <scope>NUCLEOTIDE SEQUENCE [LARGE SCALE GENOMIC DNA]</scope>
    <source>
        <strain>ATCC BAA-244 / DSM 16087 / CCUG 44356 / LMG 19182 / AMMD</strain>
    </source>
</reference>
<comment type="function">
    <text evidence="1">One of two assembly initiator proteins, it binds directly to the 5'-end of the 23S rRNA, where it nucleates assembly of the 50S subunit.</text>
</comment>
<comment type="function">
    <text evidence="1">One of the proteins that surrounds the polypeptide exit tunnel on the outside of the subunit.</text>
</comment>
<comment type="subunit">
    <text evidence="1">Part of the 50S ribosomal subunit.</text>
</comment>
<comment type="similarity">
    <text evidence="1">Belongs to the universal ribosomal protein uL24 family.</text>
</comment>
<gene>
    <name evidence="1" type="primary">rplX</name>
    <name type="ordered locus">Bamb_0278</name>
</gene>
<proteinExistence type="inferred from homology"/>
<evidence type="ECO:0000255" key="1">
    <source>
        <dbReference type="HAMAP-Rule" id="MF_01326"/>
    </source>
</evidence>
<evidence type="ECO:0000305" key="2"/>
<sequence>MNKIRKGDEVIVVTGKDKGKRGVVLAVGAEHVTVEGINLVKKHVKPNPMKGTTGGVEAKTMPLHISNVALVDANGKASRVGIKVEEGKKVRFLKTTGAVLSA</sequence>